<evidence type="ECO:0000255" key="1">
    <source>
        <dbReference type="HAMAP-Rule" id="MF_01416"/>
    </source>
</evidence>
<evidence type="ECO:0000269" key="2">
    <source>
    </source>
</evidence>
<name>ATPD_LACAC</name>
<protein>
    <recommendedName>
        <fullName evidence="1">ATP synthase subunit delta</fullName>
    </recommendedName>
    <alternativeName>
        <fullName evidence="1">ATP synthase F(1) sector subunit delta</fullName>
    </alternativeName>
    <alternativeName>
        <fullName evidence="1">F-type ATPase subunit delta</fullName>
        <shortName evidence="1">F-ATPase subunit delta</shortName>
    </alternativeName>
</protein>
<dbReference type="EMBL" id="AF098522">
    <property type="protein sequence ID" value="AAF22495.1"/>
    <property type="molecule type" value="Genomic_DNA"/>
</dbReference>
<dbReference type="EMBL" id="CP000033">
    <property type="protein sequence ID" value="AAV42641.1"/>
    <property type="molecule type" value="Genomic_DNA"/>
</dbReference>
<dbReference type="RefSeq" id="WP_003546742.1">
    <property type="nucleotide sequence ID" value="NC_006814.3"/>
</dbReference>
<dbReference type="RefSeq" id="YP_193672.1">
    <property type="nucleotide sequence ID" value="NC_006814.3"/>
</dbReference>
<dbReference type="SMR" id="Q9RGY4"/>
<dbReference type="STRING" id="272621.LBA0775"/>
<dbReference type="KEGG" id="lac:LBA0775"/>
<dbReference type="PATRIC" id="fig|272621.13.peg.737"/>
<dbReference type="eggNOG" id="COG0712">
    <property type="taxonomic scope" value="Bacteria"/>
</dbReference>
<dbReference type="HOGENOM" id="CLU_085114_4_1_9"/>
<dbReference type="OrthoDB" id="9786633at2"/>
<dbReference type="BioCyc" id="LACI272621:G1G49-791-MONOMER"/>
<dbReference type="Proteomes" id="UP000006381">
    <property type="component" value="Chromosome"/>
</dbReference>
<dbReference type="GO" id="GO:0005886">
    <property type="term" value="C:plasma membrane"/>
    <property type="evidence" value="ECO:0007669"/>
    <property type="project" value="UniProtKB-SubCell"/>
</dbReference>
<dbReference type="GO" id="GO:0045259">
    <property type="term" value="C:proton-transporting ATP synthase complex"/>
    <property type="evidence" value="ECO:0007669"/>
    <property type="project" value="UniProtKB-KW"/>
</dbReference>
<dbReference type="GO" id="GO:0046933">
    <property type="term" value="F:proton-transporting ATP synthase activity, rotational mechanism"/>
    <property type="evidence" value="ECO:0007669"/>
    <property type="project" value="UniProtKB-UniRule"/>
</dbReference>
<dbReference type="Gene3D" id="1.10.520.20">
    <property type="entry name" value="N-terminal domain of the delta subunit of the F1F0-ATP synthase"/>
    <property type="match status" value="1"/>
</dbReference>
<dbReference type="HAMAP" id="MF_01416">
    <property type="entry name" value="ATP_synth_delta_bact"/>
    <property type="match status" value="1"/>
</dbReference>
<dbReference type="InterPro" id="IPR026015">
    <property type="entry name" value="ATP_synth_OSCP/delta_N_sf"/>
</dbReference>
<dbReference type="InterPro" id="IPR000711">
    <property type="entry name" value="ATPase_OSCP/dsu"/>
</dbReference>
<dbReference type="NCBIfam" id="TIGR01145">
    <property type="entry name" value="ATP_synt_delta"/>
    <property type="match status" value="1"/>
</dbReference>
<dbReference type="NCBIfam" id="NF004403">
    <property type="entry name" value="PRK05758.2-4"/>
    <property type="match status" value="1"/>
</dbReference>
<dbReference type="PANTHER" id="PTHR11910">
    <property type="entry name" value="ATP SYNTHASE DELTA CHAIN"/>
    <property type="match status" value="1"/>
</dbReference>
<dbReference type="Pfam" id="PF00213">
    <property type="entry name" value="OSCP"/>
    <property type="match status" value="1"/>
</dbReference>
<dbReference type="PRINTS" id="PR00125">
    <property type="entry name" value="ATPASEDELTA"/>
</dbReference>
<dbReference type="SUPFAM" id="SSF47928">
    <property type="entry name" value="N-terminal domain of the delta subunit of the F1F0-ATP synthase"/>
    <property type="match status" value="1"/>
</dbReference>
<gene>
    <name evidence="1" type="primary">atpH</name>
    <name type="ordered locus">LBA0775</name>
</gene>
<organism>
    <name type="scientific">Lactobacillus acidophilus (strain ATCC 700396 / NCK56 / N2 / NCFM)</name>
    <dbReference type="NCBI Taxonomy" id="272621"/>
    <lineage>
        <taxon>Bacteria</taxon>
        <taxon>Bacillati</taxon>
        <taxon>Bacillota</taxon>
        <taxon>Bacilli</taxon>
        <taxon>Lactobacillales</taxon>
        <taxon>Lactobacillaceae</taxon>
        <taxon>Lactobacillus</taxon>
    </lineage>
</organism>
<feature type="chain" id="PRO_0000371007" description="ATP synthase subunit delta">
    <location>
        <begin position="1"/>
        <end position="182"/>
    </location>
</feature>
<comment type="function">
    <text evidence="1">F(1)F(0) ATP synthase produces ATP from ADP in the presence of a proton or sodium gradient. F-type ATPases consist of two structural domains, F(1) containing the extramembraneous catalytic core and F(0) containing the membrane proton channel, linked together by a central stalk and a peripheral stalk. During catalysis, ATP synthesis in the catalytic domain of F(1) is coupled via a rotary mechanism of the central stalk subunits to proton translocation.</text>
</comment>
<comment type="function">
    <text evidence="1">This protein is part of the stalk that links CF(0) to CF(1). It either transmits conformational changes from CF(0) to CF(1) or is implicated in proton conduction.</text>
</comment>
<comment type="activity regulation">
    <text evidence="2">Increases 2-fold following exposure to low pH.</text>
</comment>
<comment type="subunit">
    <text evidence="1">F-type ATPases have 2 components, F(1) - the catalytic core - and F(0) - the membrane proton channel. F(1) has five subunits: alpha(3), beta(3), gamma(1), delta(1), epsilon(1). F(0) has three main subunits: a(1), b(2) and c(10-14). The alpha and beta chains form an alternating ring which encloses part of the gamma chain. F(1) is attached to F(0) by a central stalk formed by the gamma and epsilon chains, while a peripheral stalk is formed by the delta and b chains.</text>
</comment>
<comment type="subcellular location">
    <subcellularLocation>
        <location evidence="1">Cell membrane</location>
        <topology evidence="1">Peripheral membrane protein</topology>
    </subcellularLocation>
</comment>
<comment type="induction">
    <text evidence="2">By low pH.</text>
</comment>
<comment type="similarity">
    <text evidence="1">Belongs to the ATPase delta chain family.</text>
</comment>
<sequence>MALSREEVAARYGTALFGYAQDNKVLDTVYDEMMALKKAAIANPKFISVLSDPILSSKDKKSILTAVEKDFSDEVQGFLNLLLEYNRFADLIDIIDQFSLLYDNENKIASGTATTAVKLDDDQLERLSESFAKKYDLNAVRLENKVDPSILGGVILQVKDRVIDGSVKNKLKKIRAQIIDEN</sequence>
<proteinExistence type="evidence at transcript level"/>
<reference key="1">
    <citation type="journal article" date="1999" name="Mol. Microbiol.">
        <title>Identification of the pH-inducible, proton-translocating F1F0-ATPase (atpBEFHAGDC) operon of Lactobacillus acidophilus by differential display: gene structure, cloning and characterization.</title>
        <authorList>
            <person name="Kullen M.J."/>
            <person name="Klaenhammer T.R."/>
        </authorList>
    </citation>
    <scope>NUCLEOTIDE SEQUENCE [GENOMIC DNA]</scope>
    <scope>ACTIVITY REGULATION</scope>
    <scope>INDUCTION</scope>
    <scope>PROBABLE OPERON</scope>
    <source>
        <strain>ATCC 700396 / NCK56 / N2 / NCFM</strain>
    </source>
</reference>
<reference key="2">
    <citation type="journal article" date="2005" name="Proc. Natl. Acad. Sci. U.S.A.">
        <title>Complete genome sequence of the probiotic lactic acid bacterium Lactobacillus acidophilus NCFM.</title>
        <authorList>
            <person name="Altermann E."/>
            <person name="Russell W.M."/>
            <person name="Azcarate-Peril M.A."/>
            <person name="Barrangou R."/>
            <person name="Buck B.L."/>
            <person name="McAuliffe O."/>
            <person name="Souther N."/>
            <person name="Dobson A."/>
            <person name="Duong T."/>
            <person name="Callanan M."/>
            <person name="Lick S."/>
            <person name="Hamrick A."/>
            <person name="Cano R."/>
            <person name="Klaenhammer T.R."/>
        </authorList>
    </citation>
    <scope>NUCLEOTIDE SEQUENCE [LARGE SCALE GENOMIC DNA]</scope>
    <source>
        <strain>ATCC 700396 / NCK56 / N2 / NCFM</strain>
    </source>
</reference>
<keyword id="KW-0066">ATP synthesis</keyword>
<keyword id="KW-1003">Cell membrane</keyword>
<keyword id="KW-0139">CF(1)</keyword>
<keyword id="KW-0375">Hydrogen ion transport</keyword>
<keyword id="KW-0406">Ion transport</keyword>
<keyword id="KW-0472">Membrane</keyword>
<keyword id="KW-1185">Reference proteome</keyword>
<keyword id="KW-0813">Transport</keyword>
<accession>Q9RGY4</accession>
<accession>Q5FKY3</accession>